<gene>
    <name evidence="1" type="primary">hisG</name>
    <name type="ordered locus">Neut_1205</name>
</gene>
<comment type="function">
    <text evidence="1">Catalyzes the condensation of ATP and 5-phosphoribose 1-diphosphate to form N'-(5'-phosphoribosyl)-ATP (PR-ATP). Has a crucial role in the pathway because the rate of histidine biosynthesis seems to be controlled primarily by regulation of HisG enzymatic activity.</text>
</comment>
<comment type="catalytic activity">
    <reaction evidence="1">
        <text>1-(5-phospho-beta-D-ribosyl)-ATP + diphosphate = 5-phospho-alpha-D-ribose 1-diphosphate + ATP</text>
        <dbReference type="Rhea" id="RHEA:18473"/>
        <dbReference type="ChEBI" id="CHEBI:30616"/>
        <dbReference type="ChEBI" id="CHEBI:33019"/>
        <dbReference type="ChEBI" id="CHEBI:58017"/>
        <dbReference type="ChEBI" id="CHEBI:73183"/>
        <dbReference type="EC" id="2.4.2.17"/>
    </reaction>
</comment>
<comment type="pathway">
    <text evidence="1">Amino-acid biosynthesis; L-histidine biosynthesis; L-histidine from 5-phospho-alpha-D-ribose 1-diphosphate: step 1/9.</text>
</comment>
<comment type="subunit">
    <text evidence="1">Heteromultimer composed of HisG and HisZ subunits.</text>
</comment>
<comment type="subcellular location">
    <subcellularLocation>
        <location evidence="1">Cytoplasm</location>
    </subcellularLocation>
</comment>
<comment type="domain">
    <text>Lacks the C-terminal regulatory region which is replaced by HisZ.</text>
</comment>
<comment type="similarity">
    <text evidence="1">Belongs to the ATP phosphoribosyltransferase family. Short subfamily.</text>
</comment>
<name>HIS1_NITEC</name>
<evidence type="ECO:0000255" key="1">
    <source>
        <dbReference type="HAMAP-Rule" id="MF_01018"/>
    </source>
</evidence>
<reference key="1">
    <citation type="journal article" date="2007" name="Environ. Microbiol.">
        <title>Whole-genome analysis of the ammonia-oxidizing bacterium, Nitrosomonas eutropha C91: implications for niche adaptation.</title>
        <authorList>
            <person name="Stein L.Y."/>
            <person name="Arp D.J."/>
            <person name="Berube P.M."/>
            <person name="Chain P.S."/>
            <person name="Hauser L."/>
            <person name="Jetten M.S."/>
            <person name="Klotz M.G."/>
            <person name="Larimer F.W."/>
            <person name="Norton J.M."/>
            <person name="Op den Camp H.J.M."/>
            <person name="Shin M."/>
            <person name="Wei X."/>
        </authorList>
    </citation>
    <scope>NUCLEOTIDE SEQUENCE [LARGE SCALE GENOMIC DNA]</scope>
    <source>
        <strain>DSM 101675 / C91 / Nm57</strain>
    </source>
</reference>
<proteinExistence type="inferred from homology"/>
<sequence>MPDITIALSKGRIFEDTIPFLEAAGIIPQDDPDTSRKLIIETNRPDVRLVMVRATDVPTYVQYGAADLGVAGKDVLLEHDGVGLYQPLDLKIARCHMMVAVRDGYDYASAVFQGARLRVATKYVKTARSHFAAKGMHVDLIKLYGSMELAPLVDLADAIVDLVSTGGTLKANRLQAVEEIMPISARLIVNQAALKLKNPTIQPLLEAFNAAIPANV</sequence>
<accession>Q0AGS2</accession>
<protein>
    <recommendedName>
        <fullName evidence="1">ATP phosphoribosyltransferase</fullName>
        <shortName evidence="1">ATP-PRT</shortName>
        <shortName evidence="1">ATP-PRTase</shortName>
        <ecNumber evidence="1">2.4.2.17</ecNumber>
    </recommendedName>
</protein>
<feature type="chain" id="PRO_1000063288" description="ATP phosphoribosyltransferase">
    <location>
        <begin position="1"/>
        <end position="216"/>
    </location>
</feature>
<dbReference type="EC" id="2.4.2.17" evidence="1"/>
<dbReference type="EMBL" id="CP000450">
    <property type="protein sequence ID" value="ABI59460.1"/>
    <property type="molecule type" value="Genomic_DNA"/>
</dbReference>
<dbReference type="RefSeq" id="WP_011634280.1">
    <property type="nucleotide sequence ID" value="NC_008344.1"/>
</dbReference>
<dbReference type="SMR" id="Q0AGS2"/>
<dbReference type="STRING" id="335283.Neut_1205"/>
<dbReference type="KEGG" id="net:Neut_1205"/>
<dbReference type="eggNOG" id="COG0040">
    <property type="taxonomic scope" value="Bacteria"/>
</dbReference>
<dbReference type="HOGENOM" id="CLU_038115_2_0_4"/>
<dbReference type="OrthoDB" id="9801867at2"/>
<dbReference type="UniPathway" id="UPA00031">
    <property type="reaction ID" value="UER00006"/>
</dbReference>
<dbReference type="Proteomes" id="UP000001966">
    <property type="component" value="Chromosome"/>
</dbReference>
<dbReference type="GO" id="GO:0005737">
    <property type="term" value="C:cytoplasm"/>
    <property type="evidence" value="ECO:0007669"/>
    <property type="project" value="UniProtKB-SubCell"/>
</dbReference>
<dbReference type="GO" id="GO:0005524">
    <property type="term" value="F:ATP binding"/>
    <property type="evidence" value="ECO:0007669"/>
    <property type="project" value="UniProtKB-KW"/>
</dbReference>
<dbReference type="GO" id="GO:0003879">
    <property type="term" value="F:ATP phosphoribosyltransferase activity"/>
    <property type="evidence" value="ECO:0007669"/>
    <property type="project" value="UniProtKB-UniRule"/>
</dbReference>
<dbReference type="GO" id="GO:0000105">
    <property type="term" value="P:L-histidine biosynthetic process"/>
    <property type="evidence" value="ECO:0007669"/>
    <property type="project" value="UniProtKB-UniRule"/>
</dbReference>
<dbReference type="CDD" id="cd13595">
    <property type="entry name" value="PBP2_HisGs"/>
    <property type="match status" value="1"/>
</dbReference>
<dbReference type="FunFam" id="3.40.190.10:FF:000011">
    <property type="entry name" value="ATP phosphoribosyltransferase"/>
    <property type="match status" value="1"/>
</dbReference>
<dbReference type="Gene3D" id="3.40.190.10">
    <property type="entry name" value="Periplasmic binding protein-like II"/>
    <property type="match status" value="2"/>
</dbReference>
<dbReference type="HAMAP" id="MF_01018">
    <property type="entry name" value="HisG_Short"/>
    <property type="match status" value="1"/>
</dbReference>
<dbReference type="InterPro" id="IPR013820">
    <property type="entry name" value="ATP_PRibTrfase_cat"/>
</dbReference>
<dbReference type="InterPro" id="IPR018198">
    <property type="entry name" value="ATP_PRibTrfase_CS"/>
</dbReference>
<dbReference type="InterPro" id="IPR001348">
    <property type="entry name" value="ATP_PRibTrfase_HisG"/>
</dbReference>
<dbReference type="InterPro" id="IPR024893">
    <property type="entry name" value="ATP_PRibTrfase_HisG_short"/>
</dbReference>
<dbReference type="NCBIfam" id="TIGR00070">
    <property type="entry name" value="hisG"/>
    <property type="match status" value="1"/>
</dbReference>
<dbReference type="PANTHER" id="PTHR21403:SF8">
    <property type="entry name" value="ATP PHOSPHORIBOSYLTRANSFERASE"/>
    <property type="match status" value="1"/>
</dbReference>
<dbReference type="PANTHER" id="PTHR21403">
    <property type="entry name" value="ATP PHOSPHORIBOSYLTRANSFERASE ATP-PRTASE"/>
    <property type="match status" value="1"/>
</dbReference>
<dbReference type="Pfam" id="PF01634">
    <property type="entry name" value="HisG"/>
    <property type="match status" value="1"/>
</dbReference>
<dbReference type="SUPFAM" id="SSF53850">
    <property type="entry name" value="Periplasmic binding protein-like II"/>
    <property type="match status" value="1"/>
</dbReference>
<dbReference type="PROSITE" id="PS01316">
    <property type="entry name" value="ATP_P_PHORIBOSYLTR"/>
    <property type="match status" value="1"/>
</dbReference>
<organism>
    <name type="scientific">Nitrosomonas eutropha (strain DSM 101675 / C91 / Nm57)</name>
    <dbReference type="NCBI Taxonomy" id="335283"/>
    <lineage>
        <taxon>Bacteria</taxon>
        <taxon>Pseudomonadati</taxon>
        <taxon>Pseudomonadota</taxon>
        <taxon>Betaproteobacteria</taxon>
        <taxon>Nitrosomonadales</taxon>
        <taxon>Nitrosomonadaceae</taxon>
        <taxon>Nitrosomonas</taxon>
    </lineage>
</organism>
<keyword id="KW-0028">Amino-acid biosynthesis</keyword>
<keyword id="KW-0067">ATP-binding</keyword>
<keyword id="KW-0963">Cytoplasm</keyword>
<keyword id="KW-0328">Glycosyltransferase</keyword>
<keyword id="KW-0368">Histidine biosynthesis</keyword>
<keyword id="KW-0547">Nucleotide-binding</keyword>
<keyword id="KW-0808">Transferase</keyword>